<dbReference type="EMBL" id="Z80360">
    <property type="protein sequence ID" value="CAB02511.1"/>
    <property type="molecule type" value="Genomic_DNA"/>
</dbReference>
<dbReference type="EMBL" id="AL009126">
    <property type="protein sequence ID" value="CAB15782.1"/>
    <property type="molecule type" value="Genomic_DNA"/>
</dbReference>
<dbReference type="PIR" id="B70057">
    <property type="entry name" value="B70057"/>
</dbReference>
<dbReference type="RefSeq" id="NP_391635.1">
    <property type="nucleotide sequence ID" value="NC_000964.3"/>
</dbReference>
<dbReference type="RefSeq" id="WP_003242889.1">
    <property type="nucleotide sequence ID" value="NZ_OZ025638.1"/>
</dbReference>
<dbReference type="SMR" id="P70993"/>
<dbReference type="FunCoup" id="P70993">
    <property type="interactions" value="3"/>
</dbReference>
<dbReference type="STRING" id="224308.BSU37550"/>
<dbReference type="PaxDb" id="224308-BSU37550"/>
<dbReference type="EnsemblBacteria" id="CAB15782">
    <property type="protein sequence ID" value="CAB15782"/>
    <property type="gene ID" value="BSU_37550"/>
</dbReference>
<dbReference type="GeneID" id="937081"/>
<dbReference type="KEGG" id="bsu:BSU37550"/>
<dbReference type="PATRIC" id="fig|224308.179.peg.4066"/>
<dbReference type="eggNOG" id="COG1846">
    <property type="taxonomic scope" value="Bacteria"/>
</dbReference>
<dbReference type="InParanoid" id="P70993"/>
<dbReference type="OrthoDB" id="3254893at2"/>
<dbReference type="PhylomeDB" id="P70993"/>
<dbReference type="BioCyc" id="BSUB:BSU37550-MONOMER"/>
<dbReference type="Proteomes" id="UP000001570">
    <property type="component" value="Chromosome"/>
</dbReference>
<dbReference type="GO" id="GO:0003677">
    <property type="term" value="F:DNA binding"/>
    <property type="evidence" value="ECO:0007669"/>
    <property type="project" value="UniProtKB-KW"/>
</dbReference>
<dbReference type="GO" id="GO:0003700">
    <property type="term" value="F:DNA-binding transcription factor activity"/>
    <property type="evidence" value="ECO:0007669"/>
    <property type="project" value="InterPro"/>
</dbReference>
<dbReference type="GO" id="GO:0006355">
    <property type="term" value="P:regulation of DNA-templated transcription"/>
    <property type="evidence" value="ECO:0000318"/>
    <property type="project" value="GO_Central"/>
</dbReference>
<dbReference type="GO" id="GO:0006950">
    <property type="term" value="P:response to stress"/>
    <property type="evidence" value="ECO:0000318"/>
    <property type="project" value="GO_Central"/>
</dbReference>
<dbReference type="Gene3D" id="1.10.10.10">
    <property type="entry name" value="Winged helix-like DNA-binding domain superfamily/Winged helix DNA-binding domain"/>
    <property type="match status" value="1"/>
</dbReference>
<dbReference type="InterPro" id="IPR000835">
    <property type="entry name" value="HTH_MarR-typ"/>
</dbReference>
<dbReference type="InterPro" id="IPR039422">
    <property type="entry name" value="MarR/SlyA-like"/>
</dbReference>
<dbReference type="InterPro" id="IPR036388">
    <property type="entry name" value="WH-like_DNA-bd_sf"/>
</dbReference>
<dbReference type="InterPro" id="IPR036390">
    <property type="entry name" value="WH_DNA-bd_sf"/>
</dbReference>
<dbReference type="PANTHER" id="PTHR33164:SF43">
    <property type="entry name" value="HTH-TYPE TRANSCRIPTIONAL REPRESSOR YETL"/>
    <property type="match status" value="1"/>
</dbReference>
<dbReference type="PANTHER" id="PTHR33164">
    <property type="entry name" value="TRANSCRIPTIONAL REGULATOR, MARR FAMILY"/>
    <property type="match status" value="1"/>
</dbReference>
<dbReference type="Pfam" id="PF01047">
    <property type="entry name" value="MarR"/>
    <property type="match status" value="1"/>
</dbReference>
<dbReference type="PRINTS" id="PR00598">
    <property type="entry name" value="HTHMARR"/>
</dbReference>
<dbReference type="SMART" id="SM00347">
    <property type="entry name" value="HTH_MARR"/>
    <property type="match status" value="1"/>
</dbReference>
<dbReference type="SUPFAM" id="SSF46785">
    <property type="entry name" value="Winged helix' DNA-binding domain"/>
    <property type="match status" value="1"/>
</dbReference>
<dbReference type="PROSITE" id="PS50995">
    <property type="entry name" value="HTH_MARR_2"/>
    <property type="match status" value="1"/>
</dbReference>
<protein>
    <recommendedName>
        <fullName>Uncharacterized HTH-type transcriptional regulator YwhA</fullName>
    </recommendedName>
</protein>
<name>YWHA_BACSU</name>
<keyword id="KW-0238">DNA-binding</keyword>
<keyword id="KW-1185">Reference proteome</keyword>
<keyword id="KW-0804">Transcription</keyword>
<keyword id="KW-0805">Transcription regulation</keyword>
<reference key="1">
    <citation type="journal article" date="1997" name="Microbiology">
        <title>The Bacillus subtilis genome from gerBC (311 degrees) to licR (334 degrees).</title>
        <authorList>
            <person name="Presecan E."/>
            <person name="Moszer I."/>
            <person name="Boursier L."/>
            <person name="Cruz Ramos H."/>
            <person name="De La Fuente V."/>
            <person name="Hullo M.-F."/>
            <person name="Lelong C."/>
            <person name="Schleich S."/>
            <person name="Sekowska A."/>
            <person name="Song B.H."/>
            <person name="Villani G."/>
            <person name="Kunst F."/>
            <person name="Danchin A."/>
            <person name="Glaser P."/>
        </authorList>
    </citation>
    <scope>NUCLEOTIDE SEQUENCE [GENOMIC DNA]</scope>
    <source>
        <strain>168</strain>
    </source>
</reference>
<reference key="2">
    <citation type="journal article" date="1997" name="Nature">
        <title>The complete genome sequence of the Gram-positive bacterium Bacillus subtilis.</title>
        <authorList>
            <person name="Kunst F."/>
            <person name="Ogasawara N."/>
            <person name="Moszer I."/>
            <person name="Albertini A.M."/>
            <person name="Alloni G."/>
            <person name="Azevedo V."/>
            <person name="Bertero M.G."/>
            <person name="Bessieres P."/>
            <person name="Bolotin A."/>
            <person name="Borchert S."/>
            <person name="Borriss R."/>
            <person name="Boursier L."/>
            <person name="Brans A."/>
            <person name="Braun M."/>
            <person name="Brignell S.C."/>
            <person name="Bron S."/>
            <person name="Brouillet S."/>
            <person name="Bruschi C.V."/>
            <person name="Caldwell B."/>
            <person name="Capuano V."/>
            <person name="Carter N.M."/>
            <person name="Choi S.-K."/>
            <person name="Codani J.-J."/>
            <person name="Connerton I.F."/>
            <person name="Cummings N.J."/>
            <person name="Daniel R.A."/>
            <person name="Denizot F."/>
            <person name="Devine K.M."/>
            <person name="Duesterhoeft A."/>
            <person name="Ehrlich S.D."/>
            <person name="Emmerson P.T."/>
            <person name="Entian K.-D."/>
            <person name="Errington J."/>
            <person name="Fabret C."/>
            <person name="Ferrari E."/>
            <person name="Foulger D."/>
            <person name="Fritz C."/>
            <person name="Fujita M."/>
            <person name="Fujita Y."/>
            <person name="Fuma S."/>
            <person name="Galizzi A."/>
            <person name="Galleron N."/>
            <person name="Ghim S.-Y."/>
            <person name="Glaser P."/>
            <person name="Goffeau A."/>
            <person name="Golightly E.J."/>
            <person name="Grandi G."/>
            <person name="Guiseppi G."/>
            <person name="Guy B.J."/>
            <person name="Haga K."/>
            <person name="Haiech J."/>
            <person name="Harwood C.R."/>
            <person name="Henaut A."/>
            <person name="Hilbert H."/>
            <person name="Holsappel S."/>
            <person name="Hosono S."/>
            <person name="Hullo M.-F."/>
            <person name="Itaya M."/>
            <person name="Jones L.-M."/>
            <person name="Joris B."/>
            <person name="Karamata D."/>
            <person name="Kasahara Y."/>
            <person name="Klaerr-Blanchard M."/>
            <person name="Klein C."/>
            <person name="Kobayashi Y."/>
            <person name="Koetter P."/>
            <person name="Koningstein G."/>
            <person name="Krogh S."/>
            <person name="Kumano M."/>
            <person name="Kurita K."/>
            <person name="Lapidus A."/>
            <person name="Lardinois S."/>
            <person name="Lauber J."/>
            <person name="Lazarevic V."/>
            <person name="Lee S.-M."/>
            <person name="Levine A."/>
            <person name="Liu H."/>
            <person name="Masuda S."/>
            <person name="Mauel C."/>
            <person name="Medigue C."/>
            <person name="Medina N."/>
            <person name="Mellado R.P."/>
            <person name="Mizuno M."/>
            <person name="Moestl D."/>
            <person name="Nakai S."/>
            <person name="Noback M."/>
            <person name="Noone D."/>
            <person name="O'Reilly M."/>
            <person name="Ogawa K."/>
            <person name="Ogiwara A."/>
            <person name="Oudega B."/>
            <person name="Park S.-H."/>
            <person name="Parro V."/>
            <person name="Pohl T.M."/>
            <person name="Portetelle D."/>
            <person name="Porwollik S."/>
            <person name="Prescott A.M."/>
            <person name="Presecan E."/>
            <person name="Pujic P."/>
            <person name="Purnelle B."/>
            <person name="Rapoport G."/>
            <person name="Rey M."/>
            <person name="Reynolds S."/>
            <person name="Rieger M."/>
            <person name="Rivolta C."/>
            <person name="Rocha E."/>
            <person name="Roche B."/>
            <person name="Rose M."/>
            <person name="Sadaie Y."/>
            <person name="Sato T."/>
            <person name="Scanlan E."/>
            <person name="Schleich S."/>
            <person name="Schroeter R."/>
            <person name="Scoffone F."/>
            <person name="Sekiguchi J."/>
            <person name="Sekowska A."/>
            <person name="Seror S.J."/>
            <person name="Serror P."/>
            <person name="Shin B.-S."/>
            <person name="Soldo B."/>
            <person name="Sorokin A."/>
            <person name="Tacconi E."/>
            <person name="Takagi T."/>
            <person name="Takahashi H."/>
            <person name="Takemaru K."/>
            <person name="Takeuchi M."/>
            <person name="Tamakoshi A."/>
            <person name="Tanaka T."/>
            <person name="Terpstra P."/>
            <person name="Tognoni A."/>
            <person name="Tosato V."/>
            <person name="Uchiyama S."/>
            <person name="Vandenbol M."/>
            <person name="Vannier F."/>
            <person name="Vassarotti A."/>
            <person name="Viari A."/>
            <person name="Wambutt R."/>
            <person name="Wedler E."/>
            <person name="Wedler H."/>
            <person name="Weitzenegger T."/>
            <person name="Winters P."/>
            <person name="Wipat A."/>
            <person name="Yamamoto H."/>
            <person name="Yamane K."/>
            <person name="Yasumoto K."/>
            <person name="Yata K."/>
            <person name="Yoshida K."/>
            <person name="Yoshikawa H.-F."/>
            <person name="Zumstein E."/>
            <person name="Yoshikawa H."/>
            <person name="Danchin A."/>
        </authorList>
    </citation>
    <scope>NUCLEOTIDE SEQUENCE [LARGE SCALE GENOMIC DNA]</scope>
    <source>
        <strain>168</strain>
    </source>
</reference>
<evidence type="ECO:0000255" key="1">
    <source>
        <dbReference type="PROSITE-ProRule" id="PRU00345"/>
    </source>
</evidence>
<gene>
    <name type="primary">ywhA</name>
    <name type="ordered locus">BSU37550</name>
</gene>
<organism>
    <name type="scientific">Bacillus subtilis (strain 168)</name>
    <dbReference type="NCBI Taxonomy" id="224308"/>
    <lineage>
        <taxon>Bacteria</taxon>
        <taxon>Bacillati</taxon>
        <taxon>Bacillota</taxon>
        <taxon>Bacilli</taxon>
        <taxon>Bacillales</taxon>
        <taxon>Bacillaceae</taxon>
        <taxon>Bacillus</taxon>
    </lineage>
</organism>
<sequence length="139" mass="15874">MDHDKLEANLLDHALTKYLKSTKQLDEATVPKHVNNVRGFILRIIYRHGSCTIKDILKEVTLSPSATTTALNHLEQEGFIERSRNNNDRRTVWITLSESGRGAAEQMIENRQQLIDGMFERLTAEEKKTFLAIIAKLAQ</sequence>
<proteinExistence type="predicted"/>
<feature type="chain" id="PRO_0000359932" description="Uncharacterized HTH-type transcriptional regulator YwhA">
    <location>
        <begin position="1"/>
        <end position="139"/>
    </location>
</feature>
<feature type="domain" description="HTH marR-type" evidence="1">
    <location>
        <begin position="8"/>
        <end position="139"/>
    </location>
</feature>
<feature type="DNA-binding region" description="H-T-H motif" evidence="1">
    <location>
        <begin position="53"/>
        <end position="76"/>
    </location>
</feature>
<accession>P70993</accession>
<accession>Q794Y8</accession>